<gene>
    <name type="primary">SAHH</name>
</gene>
<proteinExistence type="evidence at transcript level"/>
<name>SAHH_CATRO</name>
<feature type="chain" id="PRO_0000116922" description="Adenosylhomocysteinase">
    <location>
        <begin position="1"/>
        <end position="485"/>
    </location>
</feature>
<feature type="binding site" evidence="1">
    <location>
        <position position="64"/>
    </location>
    <ligand>
        <name>substrate</name>
    </ligand>
</feature>
<feature type="binding site" evidence="1">
    <location>
        <position position="139"/>
    </location>
    <ligand>
        <name>substrate</name>
    </ligand>
</feature>
<feature type="binding site" evidence="1">
    <location>
        <position position="205"/>
    </location>
    <ligand>
        <name>substrate</name>
    </ligand>
</feature>
<feature type="binding site" evidence="1">
    <location>
        <begin position="206"/>
        <end position="208"/>
    </location>
    <ligand>
        <name>NAD(+)</name>
        <dbReference type="ChEBI" id="CHEBI:57540"/>
    </ligand>
</feature>
<feature type="binding site" evidence="1">
    <location>
        <position position="235"/>
    </location>
    <ligand>
        <name>substrate</name>
    </ligand>
</feature>
<feature type="binding site" evidence="1">
    <location>
        <position position="239"/>
    </location>
    <ligand>
        <name>substrate</name>
    </ligand>
</feature>
<feature type="binding site" evidence="1">
    <location>
        <position position="240"/>
    </location>
    <ligand>
        <name>NAD(+)</name>
        <dbReference type="ChEBI" id="CHEBI:57540"/>
    </ligand>
</feature>
<feature type="binding site" evidence="1">
    <location>
        <begin position="269"/>
        <end position="274"/>
    </location>
    <ligand>
        <name>NAD(+)</name>
        <dbReference type="ChEBI" id="CHEBI:57540"/>
    </ligand>
</feature>
<feature type="binding site" evidence="1">
    <location>
        <position position="292"/>
    </location>
    <ligand>
        <name>NAD(+)</name>
        <dbReference type="ChEBI" id="CHEBI:57540"/>
    </ligand>
</feature>
<feature type="binding site" evidence="1">
    <location>
        <position position="327"/>
    </location>
    <ligand>
        <name>NAD(+)</name>
        <dbReference type="ChEBI" id="CHEBI:57540"/>
    </ligand>
</feature>
<feature type="binding site" evidence="1">
    <location>
        <begin position="348"/>
        <end position="350"/>
    </location>
    <ligand>
        <name>NAD(+)</name>
        <dbReference type="ChEBI" id="CHEBI:57540"/>
    </ligand>
</feature>
<feature type="binding site" evidence="1">
    <location>
        <position position="397"/>
    </location>
    <ligand>
        <name>NAD(+)</name>
        <dbReference type="ChEBI" id="CHEBI:57540"/>
    </ligand>
</feature>
<protein>
    <recommendedName>
        <fullName>Adenosylhomocysteinase</fullName>
        <shortName>AdoHcyase</shortName>
        <ecNumber>3.13.2.1</ecNumber>
    </recommendedName>
    <alternativeName>
        <fullName>S-adenosyl-L-homocysteine hydrolase</fullName>
    </alternativeName>
</protein>
<comment type="function">
    <text>Adenosylhomocysteine is a competitive inhibitor of S-adenosyl-L-methionine-dependent methyl transferase reactions; therefore adenosylhomocysteinase may play a key role in the control of methylations via regulation of the intracellular concentration of adenosylhomocysteine.</text>
</comment>
<comment type="catalytic activity">
    <reaction>
        <text>S-adenosyl-L-homocysteine + H2O = L-homocysteine + adenosine</text>
        <dbReference type="Rhea" id="RHEA:21708"/>
        <dbReference type="ChEBI" id="CHEBI:15377"/>
        <dbReference type="ChEBI" id="CHEBI:16335"/>
        <dbReference type="ChEBI" id="CHEBI:57856"/>
        <dbReference type="ChEBI" id="CHEBI:58199"/>
        <dbReference type="EC" id="3.13.2.1"/>
    </reaction>
</comment>
<comment type="cofactor">
    <cofactor>
        <name>NAD(+)</name>
        <dbReference type="ChEBI" id="CHEBI:57540"/>
    </cofactor>
    <text>Binds 1 NAD(+) per subunit.</text>
</comment>
<comment type="pathway">
    <text>Amino-acid biosynthesis; L-homocysteine biosynthesis; L-homocysteine from S-adenosyl-L-homocysteine: step 1/1.</text>
</comment>
<comment type="subunit">
    <text evidence="1">Homotetramer.</text>
</comment>
<comment type="induction">
    <text>By stress.</text>
</comment>
<comment type="similarity">
    <text evidence="2">Belongs to the adenosylhomocysteinase family.</text>
</comment>
<keyword id="KW-0378">Hydrolase</keyword>
<keyword id="KW-0520">NAD</keyword>
<keyword id="KW-0554">One-carbon metabolism</keyword>
<keyword id="KW-0346">Stress response</keyword>
<dbReference type="EC" id="3.13.2.1"/>
<dbReference type="EMBL" id="Z26881">
    <property type="protein sequence ID" value="CAA81527.1"/>
    <property type="molecule type" value="mRNA"/>
</dbReference>
<dbReference type="PIR" id="S38379">
    <property type="entry name" value="S38379"/>
</dbReference>
<dbReference type="SMR" id="P35007"/>
<dbReference type="UniPathway" id="UPA00314">
    <property type="reaction ID" value="UER00076"/>
</dbReference>
<dbReference type="GO" id="GO:0005829">
    <property type="term" value="C:cytosol"/>
    <property type="evidence" value="ECO:0007669"/>
    <property type="project" value="TreeGrafter"/>
</dbReference>
<dbReference type="GO" id="GO:0004013">
    <property type="term" value="F:adenosylhomocysteinase activity"/>
    <property type="evidence" value="ECO:0007669"/>
    <property type="project" value="RHEA"/>
</dbReference>
<dbReference type="GO" id="GO:0006730">
    <property type="term" value="P:one-carbon metabolic process"/>
    <property type="evidence" value="ECO:0007669"/>
    <property type="project" value="UniProtKB-KW"/>
</dbReference>
<dbReference type="GO" id="GO:0033353">
    <property type="term" value="P:S-adenosylmethionine cycle"/>
    <property type="evidence" value="ECO:0007669"/>
    <property type="project" value="TreeGrafter"/>
</dbReference>
<dbReference type="CDD" id="cd00401">
    <property type="entry name" value="SAHH"/>
    <property type="match status" value="1"/>
</dbReference>
<dbReference type="FunFam" id="3.40.50.720:FF:000004">
    <property type="entry name" value="Adenosylhomocysteinase"/>
    <property type="match status" value="1"/>
</dbReference>
<dbReference type="Gene3D" id="3.40.50.1480">
    <property type="entry name" value="Adenosylhomocysteinase-like"/>
    <property type="match status" value="1"/>
</dbReference>
<dbReference type="Gene3D" id="3.40.50.720">
    <property type="entry name" value="NAD(P)-binding Rossmann-like Domain"/>
    <property type="match status" value="1"/>
</dbReference>
<dbReference type="HAMAP" id="MF_00563">
    <property type="entry name" value="AdoHcyase"/>
    <property type="match status" value="1"/>
</dbReference>
<dbReference type="InterPro" id="IPR042172">
    <property type="entry name" value="Adenosylhomocyst_ase-like_sf"/>
</dbReference>
<dbReference type="InterPro" id="IPR000043">
    <property type="entry name" value="Adenosylhomocysteinase-like"/>
</dbReference>
<dbReference type="InterPro" id="IPR015878">
    <property type="entry name" value="Ado_hCys_hydrolase_NAD-bd"/>
</dbReference>
<dbReference type="InterPro" id="IPR036291">
    <property type="entry name" value="NAD(P)-bd_dom_sf"/>
</dbReference>
<dbReference type="InterPro" id="IPR020082">
    <property type="entry name" value="S-Ado-L-homoCys_hydrolase_CS"/>
</dbReference>
<dbReference type="NCBIfam" id="TIGR00936">
    <property type="entry name" value="ahcY"/>
    <property type="match status" value="1"/>
</dbReference>
<dbReference type="NCBIfam" id="NF004005">
    <property type="entry name" value="PRK05476.2-3"/>
    <property type="match status" value="1"/>
</dbReference>
<dbReference type="PANTHER" id="PTHR23420">
    <property type="entry name" value="ADENOSYLHOMOCYSTEINASE"/>
    <property type="match status" value="1"/>
</dbReference>
<dbReference type="PANTHER" id="PTHR23420:SF0">
    <property type="entry name" value="ADENOSYLHOMOCYSTEINASE"/>
    <property type="match status" value="1"/>
</dbReference>
<dbReference type="Pfam" id="PF05221">
    <property type="entry name" value="AdoHcyase"/>
    <property type="match status" value="1"/>
</dbReference>
<dbReference type="Pfam" id="PF00670">
    <property type="entry name" value="AdoHcyase_NAD"/>
    <property type="match status" value="1"/>
</dbReference>
<dbReference type="PIRSF" id="PIRSF001109">
    <property type="entry name" value="Ad_hcy_hydrolase"/>
    <property type="match status" value="1"/>
</dbReference>
<dbReference type="SMART" id="SM00996">
    <property type="entry name" value="AdoHcyase"/>
    <property type="match status" value="1"/>
</dbReference>
<dbReference type="SMART" id="SM00997">
    <property type="entry name" value="AdoHcyase_NAD"/>
    <property type="match status" value="1"/>
</dbReference>
<dbReference type="SUPFAM" id="SSF52283">
    <property type="entry name" value="Formate/glycerate dehydrogenase catalytic domain-like"/>
    <property type="match status" value="2"/>
</dbReference>
<dbReference type="SUPFAM" id="SSF51735">
    <property type="entry name" value="NAD(P)-binding Rossmann-fold domains"/>
    <property type="match status" value="1"/>
</dbReference>
<dbReference type="PROSITE" id="PS00738">
    <property type="entry name" value="ADOHCYASE_1"/>
    <property type="match status" value="1"/>
</dbReference>
<dbReference type="PROSITE" id="PS00739">
    <property type="entry name" value="ADOHCYASE_2"/>
    <property type="match status" value="1"/>
</dbReference>
<organism>
    <name type="scientific">Catharanthus roseus</name>
    <name type="common">Madagascar periwinkle</name>
    <name type="synonym">Vinca rosea</name>
    <dbReference type="NCBI Taxonomy" id="4058"/>
    <lineage>
        <taxon>Eukaryota</taxon>
        <taxon>Viridiplantae</taxon>
        <taxon>Streptophyta</taxon>
        <taxon>Embryophyta</taxon>
        <taxon>Tracheophyta</taxon>
        <taxon>Spermatophyta</taxon>
        <taxon>Magnoliopsida</taxon>
        <taxon>eudicotyledons</taxon>
        <taxon>Gunneridae</taxon>
        <taxon>Pentapetalae</taxon>
        <taxon>asterids</taxon>
        <taxon>lamiids</taxon>
        <taxon>Gentianales</taxon>
        <taxon>Apocynaceae</taxon>
        <taxon>Rauvolfioideae</taxon>
        <taxon>Vinceae</taxon>
        <taxon>Catharanthinae</taxon>
        <taxon>Catharanthus</taxon>
    </lineage>
</organism>
<sequence>MALLVEKTSSGREYKVKDMSQADFGRLEIELAEVEMPGLMSCRAEFGPSQPFKGAKITGSLHMTIQTAVLIETLTALGAEVRWCSCNIFSTQEHAAAAIARDSAAVFAWKGETLQEYWWCTERALDWGPDGGPDLIVDDGGDATLLIHEGVKAEEEYKKNGALPDPSSTDNAEFQIVLTIIRDGLKSDPTKYTRMKERLVGVSEETTTGVKRLYQMQANGTLLFPAINVNDSVTKSKFDNLYGCRHSLPDGLMRATDVMIAGKVAVVAGYGDVGKGCAAALKQAGARVIVTEIDPICALQATMEGLQVLTLEDVVSEADIFVTTTGNKDIIMVDHMRKMKNNAIVCNIGHFDNEIDMLGLETYPGVKRITIKPQTDRWVFPDTNSGIIVLAEGRLMNLGCATGHPSFVMSCSFTNQVIAQLELWNERKTGKYEKKVYVLPKHLDEKVAALHLGKLGAKLTKLTKDQADYISVPIEGPYKPAHYRY</sequence>
<reference key="1">
    <citation type="journal article" date="1994" name="Plant Physiol.">
        <title>cDNA for S-adenosyl-L-homocysteine hydrolase from Catharanthus roseus.</title>
        <authorList>
            <person name="Schroeder G."/>
            <person name="Waitz A."/>
            <person name="Hotze M."/>
            <person name="Schroeder J."/>
        </authorList>
    </citation>
    <scope>NUCLEOTIDE SEQUENCE [MRNA]</scope>
</reference>
<accession>P35007</accession>
<evidence type="ECO:0000250" key="1"/>
<evidence type="ECO:0000305" key="2"/>